<keyword id="KW-0028">Amino-acid biosynthesis</keyword>
<keyword id="KW-0963">Cytoplasm</keyword>
<keyword id="KW-0368">Histidine biosynthesis</keyword>
<keyword id="KW-0378">Hydrolase</keyword>
<keyword id="KW-0460">Magnesium</keyword>
<keyword id="KW-0479">Metal-binding</keyword>
<keyword id="KW-1185">Reference proteome</keyword>
<keyword id="KW-0862">Zinc</keyword>
<proteinExistence type="inferred from homology"/>
<name>HIS3_SULTO</name>
<accession>Q970Y6</accession>
<accession>F9VNE6</accession>
<dbReference type="EC" id="3.5.4.19" evidence="1"/>
<dbReference type="EMBL" id="BA000023">
    <property type="protein sequence ID" value="BAK54592.1"/>
    <property type="molecule type" value="Genomic_DNA"/>
</dbReference>
<dbReference type="RefSeq" id="WP_052846970.1">
    <property type="nucleotide sequence ID" value="NC_003106.2"/>
</dbReference>
<dbReference type="SMR" id="Q970Y6"/>
<dbReference type="STRING" id="273063.STK_14670"/>
<dbReference type="GeneID" id="1459501"/>
<dbReference type="KEGG" id="sto:STK_14670"/>
<dbReference type="PATRIC" id="fig|273063.9.peg.1672"/>
<dbReference type="eggNOG" id="arCOG02676">
    <property type="taxonomic scope" value="Archaea"/>
</dbReference>
<dbReference type="OrthoDB" id="5853at2157"/>
<dbReference type="UniPathway" id="UPA00031">
    <property type="reaction ID" value="UER00008"/>
</dbReference>
<dbReference type="Proteomes" id="UP000001015">
    <property type="component" value="Chromosome"/>
</dbReference>
<dbReference type="GO" id="GO:0005737">
    <property type="term" value="C:cytoplasm"/>
    <property type="evidence" value="ECO:0007669"/>
    <property type="project" value="UniProtKB-SubCell"/>
</dbReference>
<dbReference type="GO" id="GO:0000287">
    <property type="term" value="F:magnesium ion binding"/>
    <property type="evidence" value="ECO:0007669"/>
    <property type="project" value="UniProtKB-UniRule"/>
</dbReference>
<dbReference type="GO" id="GO:0004635">
    <property type="term" value="F:phosphoribosyl-AMP cyclohydrolase activity"/>
    <property type="evidence" value="ECO:0007669"/>
    <property type="project" value="UniProtKB-UniRule"/>
</dbReference>
<dbReference type="GO" id="GO:0008270">
    <property type="term" value="F:zinc ion binding"/>
    <property type="evidence" value="ECO:0007669"/>
    <property type="project" value="UniProtKB-UniRule"/>
</dbReference>
<dbReference type="GO" id="GO:0000105">
    <property type="term" value="P:L-histidine biosynthetic process"/>
    <property type="evidence" value="ECO:0007669"/>
    <property type="project" value="UniProtKB-UniRule"/>
</dbReference>
<dbReference type="FunFam" id="3.10.20.810:FF:000001">
    <property type="entry name" value="Histidine biosynthesis bifunctional protein HisIE"/>
    <property type="match status" value="1"/>
</dbReference>
<dbReference type="Gene3D" id="3.10.20.810">
    <property type="entry name" value="Phosphoribosyl-AMP cyclohydrolase"/>
    <property type="match status" value="1"/>
</dbReference>
<dbReference type="HAMAP" id="MF_01021">
    <property type="entry name" value="HisI"/>
    <property type="match status" value="1"/>
</dbReference>
<dbReference type="InterPro" id="IPR026660">
    <property type="entry name" value="PRA-CH"/>
</dbReference>
<dbReference type="InterPro" id="IPR002496">
    <property type="entry name" value="PRib_AMP_CycHydrolase_dom"/>
</dbReference>
<dbReference type="InterPro" id="IPR038019">
    <property type="entry name" value="PRib_AMP_CycHydrolase_sf"/>
</dbReference>
<dbReference type="NCBIfam" id="NF000768">
    <property type="entry name" value="PRK00051.1"/>
    <property type="match status" value="1"/>
</dbReference>
<dbReference type="PANTHER" id="PTHR42945">
    <property type="entry name" value="HISTIDINE BIOSYNTHESIS BIFUNCTIONAL PROTEIN"/>
    <property type="match status" value="1"/>
</dbReference>
<dbReference type="PANTHER" id="PTHR42945:SF1">
    <property type="entry name" value="HISTIDINE BIOSYNTHESIS BIFUNCTIONAL PROTEIN HIS7"/>
    <property type="match status" value="1"/>
</dbReference>
<dbReference type="Pfam" id="PF01502">
    <property type="entry name" value="PRA-CH"/>
    <property type="match status" value="1"/>
</dbReference>
<dbReference type="SUPFAM" id="SSF141734">
    <property type="entry name" value="HisI-like"/>
    <property type="match status" value="1"/>
</dbReference>
<comment type="function">
    <text evidence="1">Catalyzes the hydrolysis of the adenine ring of phosphoribosyl-AMP.</text>
</comment>
<comment type="catalytic activity">
    <reaction evidence="1">
        <text>1-(5-phospho-beta-D-ribosyl)-5'-AMP + H2O = 1-(5-phospho-beta-D-ribosyl)-5-[(5-phospho-beta-D-ribosylamino)methylideneamino]imidazole-4-carboxamide</text>
        <dbReference type="Rhea" id="RHEA:20049"/>
        <dbReference type="ChEBI" id="CHEBI:15377"/>
        <dbReference type="ChEBI" id="CHEBI:58435"/>
        <dbReference type="ChEBI" id="CHEBI:59457"/>
        <dbReference type="EC" id="3.5.4.19"/>
    </reaction>
</comment>
<comment type="cofactor">
    <cofactor evidence="1">
        <name>Mg(2+)</name>
        <dbReference type="ChEBI" id="CHEBI:18420"/>
    </cofactor>
    <text evidence="1">Binds 1 Mg(2+) ion per subunit.</text>
</comment>
<comment type="cofactor">
    <cofactor evidence="1">
        <name>Zn(2+)</name>
        <dbReference type="ChEBI" id="CHEBI:29105"/>
    </cofactor>
    <text evidence="1">Binds 1 zinc ion per subunit.</text>
</comment>
<comment type="pathway">
    <text evidence="1">Amino-acid biosynthesis; L-histidine biosynthesis; L-histidine from 5-phospho-alpha-D-ribose 1-diphosphate: step 3/9.</text>
</comment>
<comment type="subunit">
    <text evidence="1">Homodimer.</text>
</comment>
<comment type="subcellular location">
    <subcellularLocation>
        <location evidence="1">Cytoplasm</location>
    </subcellularLocation>
</comment>
<comment type="similarity">
    <text evidence="1">Belongs to the PRA-CH family.</text>
</comment>
<gene>
    <name evidence="1" type="primary">hisI</name>
    <name type="ordered locus">STK_14670</name>
</gene>
<sequence length="118" mass="13665">MKLSENEASKLIEKLWFRHTDSTIIAVLQDYKTKEVLMVGHMNREAVFKTLTTGYVHFWSLSRKKLWLKGETSGHFQLVEDFKIDCDGDAMVFLVKSVGPVCHTGNRSCFYRNFSDLI</sequence>
<organism>
    <name type="scientific">Sulfurisphaera tokodaii (strain DSM 16993 / JCM 10545 / NBRC 100140 / 7)</name>
    <name type="common">Sulfolobus tokodaii</name>
    <dbReference type="NCBI Taxonomy" id="273063"/>
    <lineage>
        <taxon>Archaea</taxon>
        <taxon>Thermoproteota</taxon>
        <taxon>Thermoprotei</taxon>
        <taxon>Sulfolobales</taxon>
        <taxon>Sulfolobaceae</taxon>
        <taxon>Sulfurisphaera</taxon>
    </lineage>
</organism>
<feature type="chain" id="PRO_0000136515" description="Phosphoribosyl-AMP cyclohydrolase">
    <location>
        <begin position="1"/>
        <end position="118"/>
    </location>
</feature>
<feature type="binding site" evidence="1">
    <location>
        <position position="85"/>
    </location>
    <ligand>
        <name>Mg(2+)</name>
        <dbReference type="ChEBI" id="CHEBI:18420"/>
    </ligand>
</feature>
<feature type="binding site" evidence="1">
    <location>
        <position position="86"/>
    </location>
    <ligand>
        <name>Zn(2+)</name>
        <dbReference type="ChEBI" id="CHEBI:29105"/>
        <note>ligand shared between dimeric partners</note>
    </ligand>
</feature>
<feature type="binding site" evidence="1">
    <location>
        <position position="87"/>
    </location>
    <ligand>
        <name>Mg(2+)</name>
        <dbReference type="ChEBI" id="CHEBI:18420"/>
    </ligand>
</feature>
<feature type="binding site" evidence="1">
    <location>
        <position position="89"/>
    </location>
    <ligand>
        <name>Mg(2+)</name>
        <dbReference type="ChEBI" id="CHEBI:18420"/>
    </ligand>
</feature>
<feature type="binding site" evidence="1">
    <location>
        <position position="102"/>
    </location>
    <ligand>
        <name>Zn(2+)</name>
        <dbReference type="ChEBI" id="CHEBI:29105"/>
        <note>ligand shared between dimeric partners</note>
    </ligand>
</feature>
<feature type="binding site" evidence="1">
    <location>
        <position position="109"/>
    </location>
    <ligand>
        <name>Zn(2+)</name>
        <dbReference type="ChEBI" id="CHEBI:29105"/>
        <note>ligand shared between dimeric partners</note>
    </ligand>
</feature>
<reference key="1">
    <citation type="journal article" date="2001" name="DNA Res.">
        <title>Complete genome sequence of an aerobic thermoacidophilic Crenarchaeon, Sulfolobus tokodaii strain7.</title>
        <authorList>
            <person name="Kawarabayasi Y."/>
            <person name="Hino Y."/>
            <person name="Horikawa H."/>
            <person name="Jin-no K."/>
            <person name="Takahashi M."/>
            <person name="Sekine M."/>
            <person name="Baba S."/>
            <person name="Ankai A."/>
            <person name="Kosugi H."/>
            <person name="Hosoyama A."/>
            <person name="Fukui S."/>
            <person name="Nagai Y."/>
            <person name="Nishijima K."/>
            <person name="Otsuka R."/>
            <person name="Nakazawa H."/>
            <person name="Takamiya M."/>
            <person name="Kato Y."/>
            <person name="Yoshizawa T."/>
            <person name="Tanaka T."/>
            <person name="Kudoh Y."/>
            <person name="Yamazaki J."/>
            <person name="Kushida N."/>
            <person name="Oguchi A."/>
            <person name="Aoki K."/>
            <person name="Masuda S."/>
            <person name="Yanagii M."/>
            <person name="Nishimura M."/>
            <person name="Yamagishi A."/>
            <person name="Oshima T."/>
            <person name="Kikuchi H."/>
        </authorList>
    </citation>
    <scope>NUCLEOTIDE SEQUENCE [LARGE SCALE GENOMIC DNA]</scope>
    <source>
        <strain>DSM 16993 / JCM 10545 / NBRC 100140 / 7</strain>
    </source>
</reference>
<protein>
    <recommendedName>
        <fullName evidence="1">Phosphoribosyl-AMP cyclohydrolase</fullName>
        <shortName evidence="1">PRA-CH</shortName>
        <ecNumber evidence="1">3.5.4.19</ecNumber>
    </recommendedName>
</protein>
<evidence type="ECO:0000255" key="1">
    <source>
        <dbReference type="HAMAP-Rule" id="MF_01021"/>
    </source>
</evidence>